<proteinExistence type="inferred from homology"/>
<accession>B0KK90</accession>
<protein>
    <recommendedName>
        <fullName evidence="1">Small ribosomal subunit protein uS4</fullName>
    </recommendedName>
    <alternativeName>
        <fullName evidence="2">30S ribosomal protein S4</fullName>
    </alternativeName>
</protein>
<name>RS4_PSEPG</name>
<organism>
    <name type="scientific">Pseudomonas putida (strain GB-1)</name>
    <dbReference type="NCBI Taxonomy" id="76869"/>
    <lineage>
        <taxon>Bacteria</taxon>
        <taxon>Pseudomonadati</taxon>
        <taxon>Pseudomonadota</taxon>
        <taxon>Gammaproteobacteria</taxon>
        <taxon>Pseudomonadales</taxon>
        <taxon>Pseudomonadaceae</taxon>
        <taxon>Pseudomonas</taxon>
    </lineage>
</organism>
<evidence type="ECO:0000255" key="1">
    <source>
        <dbReference type="HAMAP-Rule" id="MF_01306"/>
    </source>
</evidence>
<evidence type="ECO:0000305" key="2"/>
<gene>
    <name evidence="1" type="primary">rpsD</name>
    <name type="ordered locus">PputGB1_0507</name>
</gene>
<sequence length="206" mass="23070">MARYIGPKCKLSRREGTDLFLKSGVRALESKCNIEAAPGIHGQRRGRQSDYGTQLREKQKVRRIYGVLERQFRGYYQAAASKKGATGENLLQLLECRLDNVVYRMGFGSTRSESRQLVSHKAISVNGKTVNIPSYQVRPGDVVAVREKSLAQLRIVQALELCAQRGRVEWVDVDAAKKSGVFKNVPARSDLSADINENLIVELYSK</sequence>
<dbReference type="EMBL" id="CP000926">
    <property type="protein sequence ID" value="ABY96418.1"/>
    <property type="molecule type" value="Genomic_DNA"/>
</dbReference>
<dbReference type="RefSeq" id="WP_012270238.1">
    <property type="nucleotide sequence ID" value="NC_010322.1"/>
</dbReference>
<dbReference type="SMR" id="B0KK90"/>
<dbReference type="GeneID" id="45522043"/>
<dbReference type="KEGG" id="ppg:PputGB1_0507"/>
<dbReference type="eggNOG" id="COG0522">
    <property type="taxonomic scope" value="Bacteria"/>
</dbReference>
<dbReference type="HOGENOM" id="CLU_092403_0_2_6"/>
<dbReference type="Proteomes" id="UP000002157">
    <property type="component" value="Chromosome"/>
</dbReference>
<dbReference type="GO" id="GO:0015935">
    <property type="term" value="C:small ribosomal subunit"/>
    <property type="evidence" value="ECO:0007669"/>
    <property type="project" value="InterPro"/>
</dbReference>
<dbReference type="GO" id="GO:0019843">
    <property type="term" value="F:rRNA binding"/>
    <property type="evidence" value="ECO:0007669"/>
    <property type="project" value="UniProtKB-UniRule"/>
</dbReference>
<dbReference type="GO" id="GO:0003735">
    <property type="term" value="F:structural constituent of ribosome"/>
    <property type="evidence" value="ECO:0007669"/>
    <property type="project" value="InterPro"/>
</dbReference>
<dbReference type="GO" id="GO:0042274">
    <property type="term" value="P:ribosomal small subunit biogenesis"/>
    <property type="evidence" value="ECO:0007669"/>
    <property type="project" value="TreeGrafter"/>
</dbReference>
<dbReference type="GO" id="GO:0006412">
    <property type="term" value="P:translation"/>
    <property type="evidence" value="ECO:0007669"/>
    <property type="project" value="UniProtKB-UniRule"/>
</dbReference>
<dbReference type="CDD" id="cd00165">
    <property type="entry name" value="S4"/>
    <property type="match status" value="1"/>
</dbReference>
<dbReference type="FunFam" id="1.10.1050.10:FF:000001">
    <property type="entry name" value="30S ribosomal protein S4"/>
    <property type="match status" value="1"/>
</dbReference>
<dbReference type="FunFam" id="3.10.290.10:FF:000001">
    <property type="entry name" value="30S ribosomal protein S4"/>
    <property type="match status" value="1"/>
</dbReference>
<dbReference type="Gene3D" id="1.10.1050.10">
    <property type="entry name" value="Ribosomal Protein S4 Delta 41, Chain A, domain 1"/>
    <property type="match status" value="1"/>
</dbReference>
<dbReference type="Gene3D" id="3.10.290.10">
    <property type="entry name" value="RNA-binding S4 domain"/>
    <property type="match status" value="1"/>
</dbReference>
<dbReference type="HAMAP" id="MF_01306_B">
    <property type="entry name" value="Ribosomal_uS4_B"/>
    <property type="match status" value="1"/>
</dbReference>
<dbReference type="InterPro" id="IPR022801">
    <property type="entry name" value="Ribosomal_uS4"/>
</dbReference>
<dbReference type="InterPro" id="IPR005709">
    <property type="entry name" value="Ribosomal_uS4_bac-type"/>
</dbReference>
<dbReference type="InterPro" id="IPR018079">
    <property type="entry name" value="Ribosomal_uS4_CS"/>
</dbReference>
<dbReference type="InterPro" id="IPR001912">
    <property type="entry name" value="Ribosomal_uS4_N"/>
</dbReference>
<dbReference type="InterPro" id="IPR002942">
    <property type="entry name" value="S4_RNA-bd"/>
</dbReference>
<dbReference type="InterPro" id="IPR036986">
    <property type="entry name" value="S4_RNA-bd_sf"/>
</dbReference>
<dbReference type="NCBIfam" id="NF003717">
    <property type="entry name" value="PRK05327.1"/>
    <property type="match status" value="1"/>
</dbReference>
<dbReference type="NCBIfam" id="TIGR01017">
    <property type="entry name" value="rpsD_bact"/>
    <property type="match status" value="1"/>
</dbReference>
<dbReference type="PANTHER" id="PTHR11831">
    <property type="entry name" value="30S 40S RIBOSOMAL PROTEIN"/>
    <property type="match status" value="1"/>
</dbReference>
<dbReference type="PANTHER" id="PTHR11831:SF4">
    <property type="entry name" value="SMALL RIBOSOMAL SUBUNIT PROTEIN US4M"/>
    <property type="match status" value="1"/>
</dbReference>
<dbReference type="Pfam" id="PF00163">
    <property type="entry name" value="Ribosomal_S4"/>
    <property type="match status" value="1"/>
</dbReference>
<dbReference type="Pfam" id="PF01479">
    <property type="entry name" value="S4"/>
    <property type="match status" value="1"/>
</dbReference>
<dbReference type="SMART" id="SM01390">
    <property type="entry name" value="Ribosomal_S4"/>
    <property type="match status" value="1"/>
</dbReference>
<dbReference type="SMART" id="SM00363">
    <property type="entry name" value="S4"/>
    <property type="match status" value="1"/>
</dbReference>
<dbReference type="SUPFAM" id="SSF55174">
    <property type="entry name" value="Alpha-L RNA-binding motif"/>
    <property type="match status" value="1"/>
</dbReference>
<dbReference type="PROSITE" id="PS00632">
    <property type="entry name" value="RIBOSOMAL_S4"/>
    <property type="match status" value="1"/>
</dbReference>
<dbReference type="PROSITE" id="PS50889">
    <property type="entry name" value="S4"/>
    <property type="match status" value="1"/>
</dbReference>
<keyword id="KW-0687">Ribonucleoprotein</keyword>
<keyword id="KW-0689">Ribosomal protein</keyword>
<keyword id="KW-0694">RNA-binding</keyword>
<keyword id="KW-0699">rRNA-binding</keyword>
<reference key="1">
    <citation type="submission" date="2008-01" db="EMBL/GenBank/DDBJ databases">
        <title>Complete sequence of Pseudomonas putida GB-1.</title>
        <authorList>
            <consortium name="US DOE Joint Genome Institute"/>
            <person name="Copeland A."/>
            <person name="Lucas S."/>
            <person name="Lapidus A."/>
            <person name="Barry K."/>
            <person name="Glavina del Rio T."/>
            <person name="Dalin E."/>
            <person name="Tice H."/>
            <person name="Pitluck S."/>
            <person name="Bruce D."/>
            <person name="Goodwin L."/>
            <person name="Chertkov O."/>
            <person name="Brettin T."/>
            <person name="Detter J.C."/>
            <person name="Han C."/>
            <person name="Kuske C.R."/>
            <person name="Schmutz J."/>
            <person name="Larimer F."/>
            <person name="Land M."/>
            <person name="Hauser L."/>
            <person name="Kyrpides N."/>
            <person name="Kim E."/>
            <person name="McCarthy J.K."/>
            <person name="Richardson P."/>
        </authorList>
    </citation>
    <scope>NUCLEOTIDE SEQUENCE [LARGE SCALE GENOMIC DNA]</scope>
    <source>
        <strain>GB-1</strain>
    </source>
</reference>
<comment type="function">
    <text evidence="1">One of the primary rRNA binding proteins, it binds directly to 16S rRNA where it nucleates assembly of the body of the 30S subunit.</text>
</comment>
<comment type="function">
    <text evidence="1">With S5 and S12 plays an important role in translational accuracy.</text>
</comment>
<comment type="subunit">
    <text evidence="1">Part of the 30S ribosomal subunit. Contacts protein S5. The interaction surface between S4 and S5 is involved in control of translational fidelity.</text>
</comment>
<comment type="similarity">
    <text evidence="1">Belongs to the universal ribosomal protein uS4 family.</text>
</comment>
<feature type="chain" id="PRO_1000085986" description="Small ribosomal subunit protein uS4">
    <location>
        <begin position="1"/>
        <end position="206"/>
    </location>
</feature>
<feature type="domain" description="S4 RNA-binding" evidence="1">
    <location>
        <begin position="96"/>
        <end position="160"/>
    </location>
</feature>